<name>RL5_MYCTO</name>
<protein>
    <recommendedName>
        <fullName evidence="1">Large ribosomal subunit protein uL5</fullName>
    </recommendedName>
    <alternativeName>
        <fullName evidence="2">50S ribosomal protein L5</fullName>
    </alternativeName>
</protein>
<organism>
    <name type="scientific">Mycobacterium tuberculosis (strain CDC 1551 / Oshkosh)</name>
    <dbReference type="NCBI Taxonomy" id="83331"/>
    <lineage>
        <taxon>Bacteria</taxon>
        <taxon>Bacillati</taxon>
        <taxon>Actinomycetota</taxon>
        <taxon>Actinomycetes</taxon>
        <taxon>Mycobacteriales</taxon>
        <taxon>Mycobacteriaceae</taxon>
        <taxon>Mycobacterium</taxon>
        <taxon>Mycobacterium tuberculosis complex</taxon>
    </lineage>
</organism>
<feature type="chain" id="PRO_0000428232" description="Large ribosomal subunit protein uL5">
    <location>
        <begin position="1"/>
        <end position="187"/>
    </location>
</feature>
<gene>
    <name evidence="1" type="primary">rplE</name>
    <name type="ordered locus">MT0742</name>
</gene>
<keyword id="KW-1185">Reference proteome</keyword>
<keyword id="KW-0687">Ribonucleoprotein</keyword>
<keyword id="KW-0689">Ribosomal protein</keyword>
<keyword id="KW-0694">RNA-binding</keyword>
<keyword id="KW-0699">rRNA-binding</keyword>
<keyword id="KW-0820">tRNA-binding</keyword>
<sequence>MTTAQKVQPRLKERYRSEIRDALRKQFGYGNVMQIPTVTKVVVNMGVGEAARDAKLINGAVNDLALITGQKPEVRRARKSIAQFKLREGMPVGVRVTLRGDRMWEFLDRLTSIALPRIRDFRGLSPKQFDGVGNYTFGLAEQAVFHEVDVDKIDRVRGMDINVVTSAATDDEGRALLRALGFPFKEN</sequence>
<accession>P9WH82</accession>
<accession>L0T4H9</accession>
<accession>P62403</accession>
<accession>P95064</accession>
<proteinExistence type="inferred from homology"/>
<reference key="1">
    <citation type="journal article" date="2002" name="J. Bacteriol.">
        <title>Whole-genome comparison of Mycobacterium tuberculosis clinical and laboratory strains.</title>
        <authorList>
            <person name="Fleischmann R.D."/>
            <person name="Alland D."/>
            <person name="Eisen J.A."/>
            <person name="Carpenter L."/>
            <person name="White O."/>
            <person name="Peterson J.D."/>
            <person name="DeBoy R.T."/>
            <person name="Dodson R.J."/>
            <person name="Gwinn M.L."/>
            <person name="Haft D.H."/>
            <person name="Hickey E.K."/>
            <person name="Kolonay J.F."/>
            <person name="Nelson W.C."/>
            <person name="Umayam L.A."/>
            <person name="Ermolaeva M.D."/>
            <person name="Salzberg S.L."/>
            <person name="Delcher A."/>
            <person name="Utterback T.R."/>
            <person name="Weidman J.F."/>
            <person name="Khouri H.M."/>
            <person name="Gill J."/>
            <person name="Mikula A."/>
            <person name="Bishai W."/>
            <person name="Jacobs W.R. Jr."/>
            <person name="Venter J.C."/>
            <person name="Fraser C.M."/>
        </authorList>
    </citation>
    <scope>NUCLEOTIDE SEQUENCE [LARGE SCALE GENOMIC DNA]</scope>
    <source>
        <strain>CDC 1551 / Oshkosh</strain>
    </source>
</reference>
<dbReference type="EMBL" id="AE000516">
    <property type="protein sequence ID" value="AAK44975.1"/>
    <property type="molecule type" value="Genomic_DNA"/>
</dbReference>
<dbReference type="PIR" id="G70643">
    <property type="entry name" value="G70643"/>
</dbReference>
<dbReference type="RefSeq" id="WP_003403660.1">
    <property type="nucleotide sequence ID" value="NZ_KK341227.1"/>
</dbReference>
<dbReference type="SMR" id="P9WH82"/>
<dbReference type="GeneID" id="45424681"/>
<dbReference type="KEGG" id="mtc:MT0742"/>
<dbReference type="PATRIC" id="fig|83331.31.peg.794"/>
<dbReference type="HOGENOM" id="CLU_061015_2_1_11"/>
<dbReference type="Proteomes" id="UP000001020">
    <property type="component" value="Chromosome"/>
</dbReference>
<dbReference type="GO" id="GO:1990904">
    <property type="term" value="C:ribonucleoprotein complex"/>
    <property type="evidence" value="ECO:0007669"/>
    <property type="project" value="UniProtKB-KW"/>
</dbReference>
<dbReference type="GO" id="GO:0005840">
    <property type="term" value="C:ribosome"/>
    <property type="evidence" value="ECO:0007669"/>
    <property type="project" value="UniProtKB-KW"/>
</dbReference>
<dbReference type="GO" id="GO:0019843">
    <property type="term" value="F:rRNA binding"/>
    <property type="evidence" value="ECO:0007669"/>
    <property type="project" value="UniProtKB-UniRule"/>
</dbReference>
<dbReference type="GO" id="GO:0003735">
    <property type="term" value="F:structural constituent of ribosome"/>
    <property type="evidence" value="ECO:0007669"/>
    <property type="project" value="InterPro"/>
</dbReference>
<dbReference type="GO" id="GO:0000049">
    <property type="term" value="F:tRNA binding"/>
    <property type="evidence" value="ECO:0007669"/>
    <property type="project" value="UniProtKB-UniRule"/>
</dbReference>
<dbReference type="GO" id="GO:0006412">
    <property type="term" value="P:translation"/>
    <property type="evidence" value="ECO:0007669"/>
    <property type="project" value="UniProtKB-UniRule"/>
</dbReference>
<dbReference type="FunFam" id="3.30.1440.10:FF:000001">
    <property type="entry name" value="50S ribosomal protein L5"/>
    <property type="match status" value="1"/>
</dbReference>
<dbReference type="Gene3D" id="3.30.1440.10">
    <property type="match status" value="1"/>
</dbReference>
<dbReference type="HAMAP" id="MF_01333_B">
    <property type="entry name" value="Ribosomal_uL5_B"/>
    <property type="match status" value="1"/>
</dbReference>
<dbReference type="InterPro" id="IPR002132">
    <property type="entry name" value="Ribosomal_uL5"/>
</dbReference>
<dbReference type="InterPro" id="IPR020930">
    <property type="entry name" value="Ribosomal_uL5_bac-type"/>
</dbReference>
<dbReference type="InterPro" id="IPR031309">
    <property type="entry name" value="Ribosomal_uL5_C"/>
</dbReference>
<dbReference type="InterPro" id="IPR022803">
    <property type="entry name" value="Ribosomal_uL5_dom_sf"/>
</dbReference>
<dbReference type="InterPro" id="IPR031310">
    <property type="entry name" value="Ribosomal_uL5_N"/>
</dbReference>
<dbReference type="NCBIfam" id="NF000585">
    <property type="entry name" value="PRK00010.1"/>
    <property type="match status" value="1"/>
</dbReference>
<dbReference type="PANTHER" id="PTHR11994">
    <property type="entry name" value="60S RIBOSOMAL PROTEIN L11-RELATED"/>
    <property type="match status" value="1"/>
</dbReference>
<dbReference type="Pfam" id="PF00281">
    <property type="entry name" value="Ribosomal_L5"/>
    <property type="match status" value="1"/>
</dbReference>
<dbReference type="Pfam" id="PF00673">
    <property type="entry name" value="Ribosomal_L5_C"/>
    <property type="match status" value="1"/>
</dbReference>
<dbReference type="PIRSF" id="PIRSF002161">
    <property type="entry name" value="Ribosomal_L5"/>
    <property type="match status" value="1"/>
</dbReference>
<dbReference type="SUPFAM" id="SSF55282">
    <property type="entry name" value="RL5-like"/>
    <property type="match status" value="1"/>
</dbReference>
<evidence type="ECO:0000255" key="1">
    <source>
        <dbReference type="HAMAP-Rule" id="MF_01333"/>
    </source>
</evidence>
<evidence type="ECO:0000305" key="2"/>
<comment type="function">
    <text evidence="1">This is one of the proteins that bind and probably mediate the attachment of the 5S RNA into the large ribosomal subunit, where it forms part of the central protuberance. In the 70S ribosome it contacts protein S13 of the 30S subunit (bridge B1b), connecting the 2 subunits; this bridge is implicated in subunit movement. Contacts the P site tRNA; the 5S rRNA and some of its associated proteins might help stabilize positioning of ribosome-bound tRNAs.</text>
</comment>
<comment type="subunit">
    <text evidence="1">Part of the 50S ribosomal subunit; part of the 5S rRNA/L5/L18/L25 subcomplex. Contacts the 5S rRNA and the P site tRNA. Forms a bridge to the 30S subunit in the 70S ribosome.</text>
</comment>
<comment type="similarity">
    <text evidence="1">Belongs to the universal ribosomal protein uL5 family.</text>
</comment>